<evidence type="ECO:0000255" key="1">
    <source>
        <dbReference type="HAMAP-Rule" id="MF_01633"/>
    </source>
</evidence>
<gene>
    <name evidence="1" type="primary">queC</name>
    <name type="ordered locus">PSHAa1116</name>
</gene>
<reference key="1">
    <citation type="journal article" date="2005" name="Genome Res.">
        <title>Coping with cold: the genome of the versatile marine Antarctica bacterium Pseudoalteromonas haloplanktis TAC125.</title>
        <authorList>
            <person name="Medigue C."/>
            <person name="Krin E."/>
            <person name="Pascal G."/>
            <person name="Barbe V."/>
            <person name="Bernsel A."/>
            <person name="Bertin P.N."/>
            <person name="Cheung F."/>
            <person name="Cruveiller S."/>
            <person name="D'Amico S."/>
            <person name="Duilio A."/>
            <person name="Fang G."/>
            <person name="Feller G."/>
            <person name="Ho C."/>
            <person name="Mangenot S."/>
            <person name="Marino G."/>
            <person name="Nilsson J."/>
            <person name="Parrilli E."/>
            <person name="Rocha E.P.C."/>
            <person name="Rouy Z."/>
            <person name="Sekowska A."/>
            <person name="Tutino M.L."/>
            <person name="Vallenet D."/>
            <person name="von Heijne G."/>
            <person name="Danchin A."/>
        </authorList>
    </citation>
    <scope>NUCLEOTIDE SEQUENCE [LARGE SCALE GENOMIC DNA]</scope>
    <source>
        <strain>TAC 125</strain>
    </source>
</reference>
<dbReference type="EC" id="6.3.4.20" evidence="1"/>
<dbReference type="EMBL" id="CR954246">
    <property type="protein sequence ID" value="CAI86191.1"/>
    <property type="molecule type" value="Genomic_DNA"/>
</dbReference>
<dbReference type="SMR" id="Q3IKE8"/>
<dbReference type="STRING" id="326442.PSHAa1116"/>
<dbReference type="KEGG" id="pha:PSHAa1116"/>
<dbReference type="eggNOG" id="COG0603">
    <property type="taxonomic scope" value="Bacteria"/>
</dbReference>
<dbReference type="HOGENOM" id="CLU_081854_1_0_6"/>
<dbReference type="BioCyc" id="PHAL326442:PSHA_RS05550-MONOMER"/>
<dbReference type="UniPathway" id="UPA00391"/>
<dbReference type="Proteomes" id="UP000006843">
    <property type="component" value="Chromosome I"/>
</dbReference>
<dbReference type="GO" id="GO:0005524">
    <property type="term" value="F:ATP binding"/>
    <property type="evidence" value="ECO:0007669"/>
    <property type="project" value="UniProtKB-UniRule"/>
</dbReference>
<dbReference type="GO" id="GO:0016879">
    <property type="term" value="F:ligase activity, forming carbon-nitrogen bonds"/>
    <property type="evidence" value="ECO:0007669"/>
    <property type="project" value="UniProtKB-UniRule"/>
</dbReference>
<dbReference type="GO" id="GO:0008270">
    <property type="term" value="F:zinc ion binding"/>
    <property type="evidence" value="ECO:0007669"/>
    <property type="project" value="UniProtKB-UniRule"/>
</dbReference>
<dbReference type="GO" id="GO:0008616">
    <property type="term" value="P:queuosine biosynthetic process"/>
    <property type="evidence" value="ECO:0007669"/>
    <property type="project" value="UniProtKB-UniRule"/>
</dbReference>
<dbReference type="CDD" id="cd01995">
    <property type="entry name" value="QueC-like"/>
    <property type="match status" value="1"/>
</dbReference>
<dbReference type="Gene3D" id="3.40.50.620">
    <property type="entry name" value="HUPs"/>
    <property type="match status" value="1"/>
</dbReference>
<dbReference type="HAMAP" id="MF_01633">
    <property type="entry name" value="QueC"/>
    <property type="match status" value="1"/>
</dbReference>
<dbReference type="InterPro" id="IPR018317">
    <property type="entry name" value="QueC"/>
</dbReference>
<dbReference type="InterPro" id="IPR014729">
    <property type="entry name" value="Rossmann-like_a/b/a_fold"/>
</dbReference>
<dbReference type="NCBIfam" id="TIGR00364">
    <property type="entry name" value="7-cyano-7-deazaguanine synthase QueC"/>
    <property type="match status" value="1"/>
</dbReference>
<dbReference type="PANTHER" id="PTHR42914">
    <property type="entry name" value="7-CYANO-7-DEAZAGUANINE SYNTHASE"/>
    <property type="match status" value="1"/>
</dbReference>
<dbReference type="PANTHER" id="PTHR42914:SF1">
    <property type="entry name" value="7-CYANO-7-DEAZAGUANINE SYNTHASE"/>
    <property type="match status" value="1"/>
</dbReference>
<dbReference type="Pfam" id="PF06508">
    <property type="entry name" value="QueC"/>
    <property type="match status" value="1"/>
</dbReference>
<dbReference type="PIRSF" id="PIRSF006293">
    <property type="entry name" value="ExsB"/>
    <property type="match status" value="1"/>
</dbReference>
<dbReference type="SUPFAM" id="SSF52402">
    <property type="entry name" value="Adenine nucleotide alpha hydrolases-like"/>
    <property type="match status" value="1"/>
</dbReference>
<feature type="chain" id="PRO_0000246883" description="7-cyano-7-deazaguanine synthase">
    <location>
        <begin position="1"/>
        <end position="218"/>
    </location>
</feature>
<feature type="binding site" evidence="1">
    <location>
        <begin position="9"/>
        <end position="19"/>
    </location>
    <ligand>
        <name>ATP</name>
        <dbReference type="ChEBI" id="CHEBI:30616"/>
    </ligand>
</feature>
<feature type="binding site" evidence="1">
    <location>
        <position position="185"/>
    </location>
    <ligand>
        <name>Zn(2+)</name>
        <dbReference type="ChEBI" id="CHEBI:29105"/>
    </ligand>
</feature>
<feature type="binding site" evidence="1">
    <location>
        <position position="193"/>
    </location>
    <ligand>
        <name>Zn(2+)</name>
        <dbReference type="ChEBI" id="CHEBI:29105"/>
    </ligand>
</feature>
<feature type="binding site" evidence="1">
    <location>
        <position position="196"/>
    </location>
    <ligand>
        <name>Zn(2+)</name>
        <dbReference type="ChEBI" id="CHEBI:29105"/>
    </ligand>
</feature>
<feature type="binding site" evidence="1">
    <location>
        <position position="199"/>
    </location>
    <ligand>
        <name>Zn(2+)</name>
        <dbReference type="ChEBI" id="CHEBI:29105"/>
    </ligand>
</feature>
<comment type="function">
    <text evidence="1">Catalyzes the ATP-dependent conversion of 7-carboxy-7-deazaguanine (CDG) to 7-cyano-7-deazaguanine (preQ(0)).</text>
</comment>
<comment type="catalytic activity">
    <reaction evidence="1">
        <text>7-carboxy-7-deazaguanine + NH4(+) + ATP = 7-cyano-7-deazaguanine + ADP + phosphate + H2O + H(+)</text>
        <dbReference type="Rhea" id="RHEA:27982"/>
        <dbReference type="ChEBI" id="CHEBI:15377"/>
        <dbReference type="ChEBI" id="CHEBI:15378"/>
        <dbReference type="ChEBI" id="CHEBI:28938"/>
        <dbReference type="ChEBI" id="CHEBI:30616"/>
        <dbReference type="ChEBI" id="CHEBI:43474"/>
        <dbReference type="ChEBI" id="CHEBI:45075"/>
        <dbReference type="ChEBI" id="CHEBI:61036"/>
        <dbReference type="ChEBI" id="CHEBI:456216"/>
        <dbReference type="EC" id="6.3.4.20"/>
    </reaction>
</comment>
<comment type="cofactor">
    <cofactor evidence="1">
        <name>Zn(2+)</name>
        <dbReference type="ChEBI" id="CHEBI:29105"/>
    </cofactor>
    <text evidence="1">Binds 1 zinc ion per subunit.</text>
</comment>
<comment type="pathway">
    <text evidence="1">Purine metabolism; 7-cyano-7-deazaguanine biosynthesis.</text>
</comment>
<comment type="similarity">
    <text evidence="1">Belongs to the QueC family.</text>
</comment>
<proteinExistence type="inferred from homology"/>
<protein>
    <recommendedName>
        <fullName evidence="1">7-cyano-7-deazaguanine synthase</fullName>
        <ecNumber evidence="1">6.3.4.20</ecNumber>
    </recommendedName>
    <alternativeName>
        <fullName evidence="1">7-cyano-7-carbaguanine synthase</fullName>
    </alternativeName>
    <alternativeName>
        <fullName evidence="1">PreQ(0) synthase</fullName>
    </alternativeName>
    <alternativeName>
        <fullName evidence="1">Queuosine biosynthesis protein QueC</fullName>
    </alternativeName>
</protein>
<organism>
    <name type="scientific">Pseudoalteromonas translucida (strain TAC 125)</name>
    <dbReference type="NCBI Taxonomy" id="326442"/>
    <lineage>
        <taxon>Bacteria</taxon>
        <taxon>Pseudomonadati</taxon>
        <taxon>Pseudomonadota</taxon>
        <taxon>Gammaproteobacteria</taxon>
        <taxon>Alteromonadales</taxon>
        <taxon>Pseudoalteromonadaceae</taxon>
        <taxon>Pseudoalteromonas</taxon>
    </lineage>
</organism>
<keyword id="KW-0067">ATP-binding</keyword>
<keyword id="KW-0436">Ligase</keyword>
<keyword id="KW-0479">Metal-binding</keyword>
<keyword id="KW-0547">Nucleotide-binding</keyword>
<keyword id="KW-0671">Queuosine biosynthesis</keyword>
<keyword id="KW-1185">Reference proteome</keyword>
<keyword id="KW-0862">Zinc</keyword>
<sequence>MTQKVVVIYSGGMDSFTVLNKALQQGHDVYALSFDYGQRHVKELKVAAQVCKQLNVPHKIVDISAINQIIGGSSLTDDIDVPEGHYEEDSMKSTIVPNRNMILLSLAVGYAVSLKASQVYYGAHSGDHAIYPDCRPEFVQKMDDVCRIANYDAVEIFSPYLNNTKIDILTDGIAMGLDYSQTWTCYNGREKACGKCGACQERLEAFEVNNLTDPLEYE</sequence>
<name>QUEC_PSET1</name>
<accession>Q3IKE8</accession>